<evidence type="ECO:0000250" key="1">
    <source>
        <dbReference type="UniProtKB" id="P86405"/>
    </source>
</evidence>
<evidence type="ECO:0000255" key="2">
    <source>
        <dbReference type="PROSITE-ProRule" id="PRU01210"/>
    </source>
</evidence>
<evidence type="ECO:0000269" key="3">
    <source>
    </source>
</evidence>
<evidence type="ECO:0000303" key="4">
    <source>
    </source>
</evidence>
<evidence type="ECO:0000305" key="5"/>
<evidence type="ECO:0000305" key="6">
    <source>
    </source>
</evidence>
<evidence type="ECO:0000312" key="7">
    <source>
        <dbReference type="EMBL" id="ADW41694.1"/>
    </source>
</evidence>
<protein>
    <recommendedName>
        <fullName evidence="4">Sodium channel neurotoxin MeuNaTxalpha-13</fullName>
    </recommendedName>
</protein>
<dbReference type="EMBL" id="HQ332129">
    <property type="protein sequence ID" value="ADW41694.1"/>
    <property type="molecule type" value="Genomic_DNA"/>
</dbReference>
<dbReference type="SMR" id="G4WFQ2"/>
<dbReference type="GO" id="GO:0005576">
    <property type="term" value="C:extracellular region"/>
    <property type="evidence" value="ECO:0007669"/>
    <property type="project" value="UniProtKB-SubCell"/>
</dbReference>
<dbReference type="GO" id="GO:0019871">
    <property type="term" value="F:sodium channel inhibitor activity"/>
    <property type="evidence" value="ECO:0007669"/>
    <property type="project" value="InterPro"/>
</dbReference>
<dbReference type="GO" id="GO:0090729">
    <property type="term" value="F:toxin activity"/>
    <property type="evidence" value="ECO:0007669"/>
    <property type="project" value="UniProtKB-KW"/>
</dbReference>
<dbReference type="GO" id="GO:0006952">
    <property type="term" value="P:defense response"/>
    <property type="evidence" value="ECO:0007669"/>
    <property type="project" value="InterPro"/>
</dbReference>
<dbReference type="CDD" id="cd23106">
    <property type="entry name" value="neurotoxins_LC_scorpion"/>
    <property type="match status" value="1"/>
</dbReference>
<dbReference type="FunFam" id="3.30.30.10:FF:000002">
    <property type="entry name" value="Alpha-like toxin BmK-M1"/>
    <property type="match status" value="1"/>
</dbReference>
<dbReference type="Gene3D" id="3.30.30.10">
    <property type="entry name" value="Knottin, scorpion toxin-like"/>
    <property type="match status" value="1"/>
</dbReference>
<dbReference type="InterPro" id="IPR044062">
    <property type="entry name" value="LCN-type_CS_alpha_beta_dom"/>
</dbReference>
<dbReference type="InterPro" id="IPR003614">
    <property type="entry name" value="Scorpion_toxin-like"/>
</dbReference>
<dbReference type="InterPro" id="IPR036574">
    <property type="entry name" value="Scorpion_toxin-like_sf"/>
</dbReference>
<dbReference type="InterPro" id="IPR018218">
    <property type="entry name" value="Scorpion_toxinL"/>
</dbReference>
<dbReference type="InterPro" id="IPR002061">
    <property type="entry name" value="Scorpion_toxinL/defensin"/>
</dbReference>
<dbReference type="Pfam" id="PF00537">
    <property type="entry name" value="Toxin_3"/>
    <property type="match status" value="1"/>
</dbReference>
<dbReference type="PRINTS" id="PR00285">
    <property type="entry name" value="SCORPNTOXIN"/>
</dbReference>
<dbReference type="SMART" id="SM00505">
    <property type="entry name" value="Knot1"/>
    <property type="match status" value="1"/>
</dbReference>
<dbReference type="SUPFAM" id="SSF57095">
    <property type="entry name" value="Scorpion toxin-like"/>
    <property type="match status" value="1"/>
</dbReference>
<dbReference type="PROSITE" id="PS51863">
    <property type="entry name" value="LCN_CSAB"/>
    <property type="match status" value="1"/>
</dbReference>
<reference key="1">
    <citation type="journal article" date="2012" name="Mol. Cell. Proteomics">
        <title>Evolutionary diversification of Mesobuthus alpha-scorpion toxins affecting sodium channels.</title>
        <authorList>
            <person name="Zhu S."/>
            <person name="Peigneur S."/>
            <person name="Gao B."/>
            <person name="Lu X."/>
            <person name="Cao C."/>
            <person name="Tytgat J."/>
        </authorList>
    </citation>
    <scope>NUCLEOTIDE SEQUENCE [MRNA]</scope>
    <source>
        <tissue>Venom gland</tissue>
    </source>
</reference>
<proteinExistence type="evidence at transcript level"/>
<name>SCXND_MESEU</name>
<comment type="function">
    <text evidence="1">Alpha toxins bind voltage-independently at site-3 of sodium channels (Nav) and inhibit the inactivation of the activated channels, thereby blocking neuronal transmission.</text>
</comment>
<comment type="subcellular location">
    <subcellularLocation>
        <location evidence="3">Secreted</location>
    </subcellularLocation>
</comment>
<comment type="tissue specificity">
    <text evidence="6">Expressed by the venom gland.</text>
</comment>
<comment type="domain">
    <text evidence="5">Has the structural arrangement of an alpha-helix connected to antiparallel beta-sheets by disulfide bonds (CS-alpha/beta).</text>
</comment>
<comment type="similarity">
    <text evidence="5">Belongs to the long (4 C-C) scorpion toxin superfamily. Sodium channel inhibitor family. Alpha subfamily.</text>
</comment>
<keyword id="KW-1015">Disulfide bond</keyword>
<keyword id="KW-0872">Ion channel impairing toxin</keyword>
<keyword id="KW-0528">Neurotoxin</keyword>
<keyword id="KW-0964">Secreted</keyword>
<keyword id="KW-0732">Signal</keyword>
<keyword id="KW-0800">Toxin</keyword>
<keyword id="KW-0738">Voltage-gated sodium channel impairing toxin</keyword>
<sequence>TGVESARDAYIAKPHNCVYECFDAFSSYCNDLCTENGAKSGYCQIAGKYGNGCWCIELPDNVPIRIPGKCHRR</sequence>
<accession>G4WFQ2</accession>
<organism evidence="7">
    <name type="scientific">Mesobuthus eupeus</name>
    <name type="common">Lesser Asian scorpion</name>
    <name type="synonym">Buthus eupeus</name>
    <dbReference type="NCBI Taxonomy" id="34648"/>
    <lineage>
        <taxon>Eukaryota</taxon>
        <taxon>Metazoa</taxon>
        <taxon>Ecdysozoa</taxon>
        <taxon>Arthropoda</taxon>
        <taxon>Chelicerata</taxon>
        <taxon>Arachnida</taxon>
        <taxon>Scorpiones</taxon>
        <taxon>Buthida</taxon>
        <taxon>Buthoidea</taxon>
        <taxon>Buthidae</taxon>
        <taxon>Mesobuthus</taxon>
    </lineage>
</organism>
<feature type="signal peptide" evidence="5">
    <location>
        <begin position="1" status="less than"/>
        <end position="5"/>
    </location>
</feature>
<feature type="chain" id="PRO_0000447459" description="Sodium channel neurotoxin MeuNaTxalpha-13" evidence="6">
    <location>
        <begin position="6"/>
        <end position="71"/>
    </location>
</feature>
<feature type="propeptide" id="PRO_0000447460" description="Removed by a carboxypeptidase" evidence="5">
    <location>
        <begin position="72"/>
        <end position="73"/>
    </location>
</feature>
<feature type="domain" description="LCN-type CS-alpha/beta" evidence="2">
    <location>
        <begin position="7"/>
        <end position="71"/>
    </location>
</feature>
<feature type="disulfide bond" evidence="1">
    <location>
        <begin position="17"/>
        <end position="70"/>
    </location>
</feature>
<feature type="disulfide bond" evidence="1">
    <location>
        <begin position="21"/>
        <end position="43"/>
    </location>
</feature>
<feature type="disulfide bond" evidence="1">
    <location>
        <begin position="29"/>
        <end position="53"/>
    </location>
</feature>
<feature type="disulfide bond" evidence="1">
    <location>
        <begin position="33"/>
        <end position="55"/>
    </location>
</feature>
<feature type="non-terminal residue" evidence="7">
    <location>
        <position position="1"/>
    </location>
</feature>